<sequence length="571" mass="63178">MAKVRIYQLAKELGMETQELLELLDQMGVAYKSHASTLEEKDAEAVRELVKEQRGLQEKLAEEERRKSLPRRPPVVVIMGHVDHGKTTLLDYLRKSRIAEKEAGGITQHVGAFEVKTPQGTVVFIDTPGHEAFTTIRQRGAKVADIAVIVIAADDGIMPQTEEAIAHAKAAGAKLIFAINKIDLPQADPEKVKRQLMERGFVPEEYGGDAIVIPISAKTGQGVQDLLEMILLLAELEDYRADPNAEPRGVILESKLDKQAGIIANMLVQEGTFRVGDYVVAGEAYGRIRAMMDADGNQRKEAGPGSAVQVLGFQELPHAGDVVEWVPDLEAAKEIAEERKEERKAREEEEKARRPRTMAELLRAMQEEGRKELNLILRADTQGSLEAIQHILARESTEDVKINILLAQVGAPTESDVLLAQTANAAILAFGVNPPGSVKKKAEEKGVLLKTFRIIYDLVDEVRNMVKGQREPQYKEEVLGQAEVRAIFRLPTGKQVAGCMVTQGRIPRNAEVRVLRDGQVIWQGRIASLKRFKEDVREVAQGYECGIGLDGFDDFREGDVIEAFQMVEVPA</sequence>
<name>IF2_THET8</name>
<comment type="function">
    <text evidence="1">One of the essential components for the initiation of protein synthesis. Protects formylmethionyl-tRNA from spontaneous hydrolysis and promotes its binding to the 30S ribosomal subunits. Also involved in the hydrolysis of GTP during the formation of the 70S ribosomal complex (By similarity).</text>
</comment>
<comment type="subcellular location">
    <subcellularLocation>
        <location>Cytoplasm</location>
    </subcellularLocation>
</comment>
<comment type="similarity">
    <text evidence="2">Belongs to the TRAFAC class translation factor GTPase superfamily. Classic translation factor GTPase family. IF-2 subfamily.</text>
</comment>
<proteinExistence type="evidence at protein level"/>
<gene>
    <name type="primary">infB</name>
    <name type="ordered locus">TTHA0699</name>
</gene>
<protein>
    <recommendedName>
        <fullName>Translation initiation factor IF-2</fullName>
    </recommendedName>
</protein>
<dbReference type="EMBL" id="Z48001">
    <property type="protein sequence ID" value="CAA88038.1"/>
    <property type="molecule type" value="Genomic_DNA"/>
</dbReference>
<dbReference type="EMBL" id="AP008226">
    <property type="protein sequence ID" value="BAD70522.1"/>
    <property type="molecule type" value="Genomic_DNA"/>
</dbReference>
<dbReference type="PIR" id="S52276">
    <property type="entry name" value="S52276"/>
</dbReference>
<dbReference type="RefSeq" id="WP_011172797.1">
    <property type="nucleotide sequence ID" value="NC_006461.1"/>
</dbReference>
<dbReference type="RefSeq" id="YP_143965.1">
    <property type="nucleotide sequence ID" value="NC_006461.1"/>
</dbReference>
<dbReference type="PDB" id="3J4J">
    <property type="method" value="EM"/>
    <property type="resolution" value="11.50 A"/>
    <property type="chains" value="A=1-569"/>
</dbReference>
<dbReference type="PDB" id="4B3X">
    <property type="method" value="X-ray"/>
    <property type="resolution" value="1.95 A"/>
    <property type="chains" value="A=1-363"/>
</dbReference>
<dbReference type="PDB" id="4B43">
    <property type="method" value="X-ray"/>
    <property type="resolution" value="1.94 A"/>
    <property type="chains" value="A=1-363"/>
</dbReference>
<dbReference type="PDB" id="4B44">
    <property type="method" value="X-ray"/>
    <property type="resolution" value="2.70 A"/>
    <property type="chains" value="A=1-363"/>
</dbReference>
<dbReference type="PDB" id="4B47">
    <property type="method" value="X-ray"/>
    <property type="resolution" value="2.30 A"/>
    <property type="chains" value="A=1-363"/>
</dbReference>
<dbReference type="PDB" id="4B48">
    <property type="method" value="X-ray"/>
    <property type="resolution" value="2.80 A"/>
    <property type="chains" value="A=1-363"/>
</dbReference>
<dbReference type="PDB" id="4KJZ">
    <property type="method" value="X-ray"/>
    <property type="resolution" value="2.80 A"/>
    <property type="chains" value="A/B/C/D=2-474"/>
</dbReference>
<dbReference type="PDB" id="5LMV">
    <property type="method" value="EM"/>
    <property type="resolution" value="4.90 A"/>
    <property type="chains" value="a=1-571"/>
</dbReference>
<dbReference type="PDBsum" id="3J4J"/>
<dbReference type="PDBsum" id="4B3X"/>
<dbReference type="PDBsum" id="4B43"/>
<dbReference type="PDBsum" id="4B44"/>
<dbReference type="PDBsum" id="4B47"/>
<dbReference type="PDBsum" id="4B48"/>
<dbReference type="PDBsum" id="4KJZ"/>
<dbReference type="PDBsum" id="5LMV"/>
<dbReference type="EMDB" id="EMD-2448"/>
<dbReference type="EMDB" id="EMD-4083"/>
<dbReference type="SMR" id="P48515"/>
<dbReference type="EnsemblBacteria" id="BAD70522">
    <property type="protein sequence ID" value="BAD70522"/>
    <property type="gene ID" value="BAD70522"/>
</dbReference>
<dbReference type="GeneID" id="3168456"/>
<dbReference type="KEGG" id="ttj:TTHA0699"/>
<dbReference type="PATRIC" id="fig|300852.9.peg.693"/>
<dbReference type="eggNOG" id="COG0532">
    <property type="taxonomic scope" value="Bacteria"/>
</dbReference>
<dbReference type="HOGENOM" id="CLU_006301_5_1_0"/>
<dbReference type="PhylomeDB" id="P48515"/>
<dbReference type="BRENDA" id="3.6.5.3">
    <property type="organism ID" value="2305"/>
</dbReference>
<dbReference type="EvolutionaryTrace" id="P48515"/>
<dbReference type="Proteomes" id="UP000000532">
    <property type="component" value="Chromosome"/>
</dbReference>
<dbReference type="GO" id="GO:0005829">
    <property type="term" value="C:cytosol"/>
    <property type="evidence" value="ECO:0007669"/>
    <property type="project" value="TreeGrafter"/>
</dbReference>
<dbReference type="GO" id="GO:0005525">
    <property type="term" value="F:GTP binding"/>
    <property type="evidence" value="ECO:0007669"/>
    <property type="project" value="UniProtKB-KW"/>
</dbReference>
<dbReference type="GO" id="GO:0003924">
    <property type="term" value="F:GTPase activity"/>
    <property type="evidence" value="ECO:0007669"/>
    <property type="project" value="UniProtKB-UniRule"/>
</dbReference>
<dbReference type="GO" id="GO:0003743">
    <property type="term" value="F:translation initiation factor activity"/>
    <property type="evidence" value="ECO:0007669"/>
    <property type="project" value="UniProtKB-UniRule"/>
</dbReference>
<dbReference type="CDD" id="cd01887">
    <property type="entry name" value="IF2_eIF5B"/>
    <property type="match status" value="1"/>
</dbReference>
<dbReference type="CDD" id="cd03702">
    <property type="entry name" value="IF2_mtIF2_II"/>
    <property type="match status" value="1"/>
</dbReference>
<dbReference type="CDD" id="cd03692">
    <property type="entry name" value="mtIF2_IVc"/>
    <property type="match status" value="1"/>
</dbReference>
<dbReference type="FunFam" id="2.40.30.10:FF:000008">
    <property type="entry name" value="Translation initiation factor IF-2"/>
    <property type="match status" value="1"/>
</dbReference>
<dbReference type="FunFam" id="2.40.30.10:FF:000054">
    <property type="entry name" value="Translation initiation factor IF-2"/>
    <property type="match status" value="1"/>
</dbReference>
<dbReference type="FunFam" id="3.40.50.10050:FF:000001">
    <property type="entry name" value="Translation initiation factor IF-2"/>
    <property type="match status" value="1"/>
</dbReference>
<dbReference type="FunFam" id="3.40.50.300:FF:000019">
    <property type="entry name" value="Translation initiation factor IF-2"/>
    <property type="match status" value="1"/>
</dbReference>
<dbReference type="Gene3D" id="1.10.10.2480">
    <property type="match status" value="1"/>
</dbReference>
<dbReference type="Gene3D" id="3.40.50.300">
    <property type="entry name" value="P-loop containing nucleotide triphosphate hydrolases"/>
    <property type="match status" value="1"/>
</dbReference>
<dbReference type="Gene3D" id="2.40.30.10">
    <property type="entry name" value="Translation factors"/>
    <property type="match status" value="2"/>
</dbReference>
<dbReference type="Gene3D" id="3.40.50.10050">
    <property type="entry name" value="Translation initiation factor IF- 2, domain 3"/>
    <property type="match status" value="1"/>
</dbReference>
<dbReference type="HAMAP" id="MF_00100_B">
    <property type="entry name" value="IF_2_B"/>
    <property type="match status" value="1"/>
</dbReference>
<dbReference type="InterPro" id="IPR053905">
    <property type="entry name" value="EF-G-like_DII"/>
</dbReference>
<dbReference type="InterPro" id="IPR004161">
    <property type="entry name" value="EFTu-like_2"/>
</dbReference>
<dbReference type="InterPro" id="IPR044145">
    <property type="entry name" value="IF2_II"/>
</dbReference>
<dbReference type="InterPro" id="IPR006847">
    <property type="entry name" value="IF2_N"/>
</dbReference>
<dbReference type="InterPro" id="IPR027417">
    <property type="entry name" value="P-loop_NTPase"/>
</dbReference>
<dbReference type="InterPro" id="IPR005225">
    <property type="entry name" value="Small_GTP-bd"/>
</dbReference>
<dbReference type="InterPro" id="IPR000795">
    <property type="entry name" value="T_Tr_GTP-bd_dom"/>
</dbReference>
<dbReference type="InterPro" id="IPR000178">
    <property type="entry name" value="TF_IF2_bacterial-like"/>
</dbReference>
<dbReference type="InterPro" id="IPR015760">
    <property type="entry name" value="TIF_IF2"/>
</dbReference>
<dbReference type="InterPro" id="IPR023115">
    <property type="entry name" value="TIF_IF2_dom3"/>
</dbReference>
<dbReference type="InterPro" id="IPR036925">
    <property type="entry name" value="TIF_IF2_dom3_sf"/>
</dbReference>
<dbReference type="InterPro" id="IPR009000">
    <property type="entry name" value="Transl_B-barrel_sf"/>
</dbReference>
<dbReference type="NCBIfam" id="TIGR00487">
    <property type="entry name" value="IF-2"/>
    <property type="match status" value="1"/>
</dbReference>
<dbReference type="NCBIfam" id="TIGR00231">
    <property type="entry name" value="small_GTP"/>
    <property type="match status" value="1"/>
</dbReference>
<dbReference type="PANTHER" id="PTHR43381:SF5">
    <property type="entry name" value="TR-TYPE G DOMAIN-CONTAINING PROTEIN"/>
    <property type="match status" value="1"/>
</dbReference>
<dbReference type="PANTHER" id="PTHR43381">
    <property type="entry name" value="TRANSLATION INITIATION FACTOR IF-2-RELATED"/>
    <property type="match status" value="1"/>
</dbReference>
<dbReference type="Pfam" id="PF22042">
    <property type="entry name" value="EF-G_D2"/>
    <property type="match status" value="1"/>
</dbReference>
<dbReference type="Pfam" id="PF00009">
    <property type="entry name" value="GTP_EFTU"/>
    <property type="match status" value="1"/>
</dbReference>
<dbReference type="Pfam" id="PF03144">
    <property type="entry name" value="GTP_EFTU_D2"/>
    <property type="match status" value="1"/>
</dbReference>
<dbReference type="Pfam" id="PF11987">
    <property type="entry name" value="IF-2"/>
    <property type="match status" value="1"/>
</dbReference>
<dbReference type="Pfam" id="PF04760">
    <property type="entry name" value="IF2_N"/>
    <property type="match status" value="1"/>
</dbReference>
<dbReference type="SUPFAM" id="SSF52156">
    <property type="entry name" value="Initiation factor IF2/eIF5b, domain 3"/>
    <property type="match status" value="1"/>
</dbReference>
<dbReference type="SUPFAM" id="SSF52540">
    <property type="entry name" value="P-loop containing nucleoside triphosphate hydrolases"/>
    <property type="match status" value="1"/>
</dbReference>
<dbReference type="SUPFAM" id="SSF50447">
    <property type="entry name" value="Translation proteins"/>
    <property type="match status" value="2"/>
</dbReference>
<dbReference type="PROSITE" id="PS51722">
    <property type="entry name" value="G_TR_2"/>
    <property type="match status" value="1"/>
</dbReference>
<dbReference type="PROSITE" id="PS01176">
    <property type="entry name" value="IF2"/>
    <property type="match status" value="1"/>
</dbReference>
<accession>P48515</accession>
<accession>Q5SKE4</accession>
<reference key="1">
    <citation type="journal article" date="1997" name="Eur. J. Biochem.">
        <title>Identification and purification of translation initiation factor 2 (IF2) from Thermus thermophilus.</title>
        <authorList>
            <person name="Vornlocher H.-P."/>
            <person name="Scheible W.R."/>
            <person name="Faulhammer H.G."/>
            <person name="Sprinzl M."/>
        </authorList>
    </citation>
    <scope>NUCLEOTIDE SEQUENCE [GENOMIC DNA]</scope>
    <scope>PARTIAL PROTEIN SEQUENCE</scope>
</reference>
<reference key="2">
    <citation type="submission" date="2004-11" db="EMBL/GenBank/DDBJ databases">
        <title>Complete genome sequence of Thermus thermophilus HB8.</title>
        <authorList>
            <person name="Masui R."/>
            <person name="Kurokawa K."/>
            <person name="Nakagawa N."/>
            <person name="Tokunaga F."/>
            <person name="Koyama Y."/>
            <person name="Shibata T."/>
            <person name="Oshima T."/>
            <person name="Yokoyama S."/>
            <person name="Yasunaga T."/>
            <person name="Kuramitsu S."/>
        </authorList>
    </citation>
    <scope>NUCLEOTIDE SEQUENCE [LARGE SCALE GENOMIC DNA]</scope>
    <source>
        <strain>ATCC 27634 / DSM 579 / HB8</strain>
    </source>
</reference>
<feature type="chain" id="PRO_0000137273" description="Translation initiation factor IF-2">
    <location>
        <begin position="1"/>
        <end position="571"/>
    </location>
</feature>
<feature type="domain" description="tr-type G">
    <location>
        <begin position="71"/>
        <end position="239"/>
    </location>
</feature>
<feature type="region of interest" description="G1" evidence="1">
    <location>
        <begin position="80"/>
        <end position="87"/>
    </location>
</feature>
<feature type="region of interest" description="G2" evidence="1">
    <location>
        <begin position="105"/>
        <end position="109"/>
    </location>
</feature>
<feature type="region of interest" description="G3" evidence="1">
    <location>
        <begin position="126"/>
        <end position="129"/>
    </location>
</feature>
<feature type="region of interest" description="G4" evidence="1">
    <location>
        <begin position="180"/>
        <end position="183"/>
    </location>
</feature>
<feature type="region of interest" description="G5" evidence="1">
    <location>
        <begin position="216"/>
        <end position="218"/>
    </location>
</feature>
<feature type="binding site" evidence="1">
    <location>
        <begin position="80"/>
        <end position="87"/>
    </location>
    <ligand>
        <name>GTP</name>
        <dbReference type="ChEBI" id="CHEBI:37565"/>
    </ligand>
</feature>
<feature type="binding site" evidence="1">
    <location>
        <begin position="126"/>
        <end position="130"/>
    </location>
    <ligand>
        <name>GTP</name>
        <dbReference type="ChEBI" id="CHEBI:37565"/>
    </ligand>
</feature>
<feature type="binding site" evidence="1">
    <location>
        <begin position="180"/>
        <end position="183"/>
    </location>
    <ligand>
        <name>GTP</name>
        <dbReference type="ChEBI" id="CHEBI:37565"/>
    </ligand>
</feature>
<feature type="sequence conflict" description="In Ref. 1; CAA88038." evidence="2" ref="1">
    <original>A</original>
    <variation>P</variation>
    <location>
        <position position="319"/>
    </location>
</feature>
<feature type="sequence conflict" description="In Ref. 1; CAA88038." evidence="2" ref="1">
    <original>A</original>
    <variation>G</variation>
    <location>
        <position position="497"/>
    </location>
</feature>
<feature type="strand" evidence="6">
    <location>
        <begin position="3"/>
        <end position="5"/>
    </location>
</feature>
<feature type="helix" evidence="4">
    <location>
        <begin position="6"/>
        <end position="13"/>
    </location>
</feature>
<feature type="helix" evidence="4">
    <location>
        <begin position="17"/>
        <end position="27"/>
    </location>
</feature>
<feature type="strand" evidence="4">
    <location>
        <begin position="36"/>
        <end position="38"/>
    </location>
</feature>
<feature type="helix" evidence="4">
    <location>
        <begin position="40"/>
        <end position="66"/>
    </location>
</feature>
<feature type="strand" evidence="4">
    <location>
        <begin position="75"/>
        <end position="80"/>
    </location>
</feature>
<feature type="helix" evidence="4">
    <location>
        <begin position="82"/>
        <end position="84"/>
    </location>
</feature>
<feature type="helix" evidence="4">
    <location>
        <begin position="86"/>
        <end position="95"/>
    </location>
</feature>
<feature type="strand" evidence="7">
    <location>
        <begin position="96"/>
        <end position="98"/>
    </location>
</feature>
<feature type="strand" evidence="5">
    <location>
        <begin position="99"/>
        <end position="101"/>
    </location>
</feature>
<feature type="strand" evidence="4">
    <location>
        <begin position="102"/>
        <end position="104"/>
    </location>
</feature>
<feature type="strand" evidence="4">
    <location>
        <begin position="111"/>
        <end position="117"/>
    </location>
</feature>
<feature type="strand" evidence="4">
    <location>
        <begin position="120"/>
        <end position="127"/>
    </location>
</feature>
<feature type="strand" evidence="3">
    <location>
        <begin position="128"/>
        <end position="134"/>
    </location>
</feature>
<feature type="helix" evidence="7">
    <location>
        <begin position="136"/>
        <end position="139"/>
    </location>
</feature>
<feature type="strand" evidence="4">
    <location>
        <begin position="145"/>
        <end position="152"/>
    </location>
</feature>
<feature type="turn" evidence="4">
    <location>
        <begin position="153"/>
        <end position="155"/>
    </location>
</feature>
<feature type="helix" evidence="4">
    <location>
        <begin position="159"/>
        <end position="170"/>
    </location>
</feature>
<feature type="strand" evidence="4">
    <location>
        <begin position="174"/>
        <end position="180"/>
    </location>
</feature>
<feature type="helix" evidence="4">
    <location>
        <begin position="189"/>
        <end position="198"/>
    </location>
</feature>
<feature type="helix" evidence="4">
    <location>
        <begin position="204"/>
        <end position="206"/>
    </location>
</feature>
<feature type="strand" evidence="4">
    <location>
        <begin position="208"/>
        <end position="210"/>
    </location>
</feature>
<feature type="strand" evidence="4">
    <location>
        <begin position="212"/>
        <end position="214"/>
    </location>
</feature>
<feature type="turn" evidence="4">
    <location>
        <begin position="217"/>
        <end position="219"/>
    </location>
</feature>
<feature type="helix" evidence="4">
    <location>
        <begin position="223"/>
        <end position="237"/>
    </location>
</feature>
<feature type="strand" evidence="7">
    <location>
        <begin position="243"/>
        <end position="246"/>
    </location>
</feature>
<feature type="strand" evidence="4">
    <location>
        <begin position="248"/>
        <end position="257"/>
    </location>
</feature>
<feature type="turn" evidence="4">
    <location>
        <begin position="258"/>
        <end position="260"/>
    </location>
</feature>
<feature type="strand" evidence="4">
    <location>
        <begin position="261"/>
        <end position="271"/>
    </location>
</feature>
<feature type="strand" evidence="4">
    <location>
        <begin position="278"/>
        <end position="281"/>
    </location>
</feature>
<feature type="strand" evidence="4">
    <location>
        <begin position="284"/>
        <end position="292"/>
    </location>
</feature>
<feature type="strand" evidence="4">
    <location>
        <begin position="298"/>
        <end position="302"/>
    </location>
</feature>
<feature type="strand" evidence="4">
    <location>
        <begin position="307"/>
        <end position="315"/>
    </location>
</feature>
<feature type="strand" evidence="4">
    <location>
        <begin position="322"/>
        <end position="328"/>
    </location>
</feature>
<feature type="helix" evidence="4">
    <location>
        <begin position="329"/>
        <end position="351"/>
    </location>
</feature>
<feature type="turn" evidence="7">
    <location>
        <begin position="362"/>
        <end position="364"/>
    </location>
</feature>
<feature type="strand" evidence="7">
    <location>
        <begin position="372"/>
        <end position="380"/>
    </location>
</feature>
<feature type="turn" evidence="7">
    <location>
        <begin position="383"/>
        <end position="387"/>
    </location>
</feature>
<feature type="helix" evidence="7">
    <location>
        <begin position="388"/>
        <end position="392"/>
    </location>
</feature>
<feature type="strand" evidence="7">
    <location>
        <begin position="401"/>
        <end position="411"/>
    </location>
</feature>
<feature type="helix" evidence="7">
    <location>
        <begin position="414"/>
        <end position="423"/>
    </location>
</feature>
<feature type="strand" evidence="7">
    <location>
        <begin position="426"/>
        <end position="432"/>
    </location>
</feature>
<feature type="turn" evidence="7">
    <location>
        <begin position="436"/>
        <end position="439"/>
    </location>
</feature>
<feature type="helix" evidence="7">
    <location>
        <begin position="440"/>
        <end position="444"/>
    </location>
</feature>
<feature type="strand" evidence="7">
    <location>
        <begin position="449"/>
        <end position="455"/>
    </location>
</feature>
<feature type="helix" evidence="7">
    <location>
        <begin position="456"/>
        <end position="464"/>
    </location>
</feature>
<feature type="turn" evidence="7">
    <location>
        <begin position="465"/>
        <end position="469"/>
    </location>
</feature>
<organism>
    <name type="scientific">Thermus thermophilus (strain ATCC 27634 / DSM 579 / HB8)</name>
    <dbReference type="NCBI Taxonomy" id="300852"/>
    <lineage>
        <taxon>Bacteria</taxon>
        <taxon>Thermotogati</taxon>
        <taxon>Deinococcota</taxon>
        <taxon>Deinococci</taxon>
        <taxon>Thermales</taxon>
        <taxon>Thermaceae</taxon>
        <taxon>Thermus</taxon>
    </lineage>
</organism>
<keyword id="KW-0002">3D-structure</keyword>
<keyword id="KW-0963">Cytoplasm</keyword>
<keyword id="KW-0903">Direct protein sequencing</keyword>
<keyword id="KW-0342">GTP-binding</keyword>
<keyword id="KW-0396">Initiation factor</keyword>
<keyword id="KW-0547">Nucleotide-binding</keyword>
<keyword id="KW-0648">Protein biosynthesis</keyword>
<keyword id="KW-1185">Reference proteome</keyword>
<evidence type="ECO:0000250" key="1"/>
<evidence type="ECO:0000305" key="2"/>
<evidence type="ECO:0007829" key="3">
    <source>
        <dbReference type="PDB" id="4B3X"/>
    </source>
</evidence>
<evidence type="ECO:0007829" key="4">
    <source>
        <dbReference type="PDB" id="4B43"/>
    </source>
</evidence>
<evidence type="ECO:0007829" key="5">
    <source>
        <dbReference type="PDB" id="4B47"/>
    </source>
</evidence>
<evidence type="ECO:0007829" key="6">
    <source>
        <dbReference type="PDB" id="4B48"/>
    </source>
</evidence>
<evidence type="ECO:0007829" key="7">
    <source>
        <dbReference type="PDB" id="4KJZ"/>
    </source>
</evidence>